<name>HSF2_CHICK</name>
<dbReference type="EMBL" id="L06125">
    <property type="protein sequence ID" value="AFP54344.1"/>
    <property type="molecule type" value="mRNA"/>
</dbReference>
<dbReference type="SMR" id="P38530"/>
<dbReference type="FunCoup" id="P38530">
    <property type="interactions" value="427"/>
</dbReference>
<dbReference type="STRING" id="9031.ENSGALP00000068068"/>
<dbReference type="PaxDb" id="9031-ENSGALP00000031100"/>
<dbReference type="VEuPathDB" id="HostDB:geneid_421724"/>
<dbReference type="eggNOG" id="KOG0627">
    <property type="taxonomic scope" value="Eukaryota"/>
</dbReference>
<dbReference type="HOGENOM" id="CLU_038829_1_0_1"/>
<dbReference type="InParanoid" id="P38530"/>
<dbReference type="OrthoDB" id="60033at2759"/>
<dbReference type="PhylomeDB" id="P38530"/>
<dbReference type="Proteomes" id="UP000000539">
    <property type="component" value="Unassembled WGS sequence"/>
</dbReference>
<dbReference type="GO" id="GO:0000785">
    <property type="term" value="C:chromatin"/>
    <property type="evidence" value="ECO:0000314"/>
    <property type="project" value="AgBase"/>
</dbReference>
<dbReference type="GO" id="GO:0005737">
    <property type="term" value="C:cytoplasm"/>
    <property type="evidence" value="ECO:0000314"/>
    <property type="project" value="AgBase"/>
</dbReference>
<dbReference type="GO" id="GO:0005634">
    <property type="term" value="C:nucleus"/>
    <property type="evidence" value="ECO:0000314"/>
    <property type="project" value="AgBase"/>
</dbReference>
<dbReference type="GO" id="GO:0001046">
    <property type="term" value="F:core promoter sequence-specific DNA binding"/>
    <property type="evidence" value="ECO:0000314"/>
    <property type="project" value="AgBase"/>
</dbReference>
<dbReference type="GO" id="GO:0003700">
    <property type="term" value="F:DNA-binding transcription factor activity"/>
    <property type="evidence" value="ECO:0007669"/>
    <property type="project" value="InterPro"/>
</dbReference>
<dbReference type="GO" id="GO:0042803">
    <property type="term" value="F:protein homodimerization activity"/>
    <property type="evidence" value="ECO:0000314"/>
    <property type="project" value="AgBase"/>
</dbReference>
<dbReference type="GO" id="GO:0031397">
    <property type="term" value="P:negative regulation of protein ubiquitination"/>
    <property type="evidence" value="ECO:0000315"/>
    <property type="project" value="AgBase"/>
</dbReference>
<dbReference type="GO" id="GO:0050821">
    <property type="term" value="P:protein stabilization"/>
    <property type="evidence" value="ECO:0000315"/>
    <property type="project" value="AgBase"/>
</dbReference>
<dbReference type="GO" id="GO:0009416">
    <property type="term" value="P:response to light stimulus"/>
    <property type="evidence" value="ECO:0000314"/>
    <property type="project" value="AgBase"/>
</dbReference>
<dbReference type="GO" id="GO:1903935">
    <property type="term" value="P:response to sodium arsenite"/>
    <property type="evidence" value="ECO:0000315"/>
    <property type="project" value="AgBase"/>
</dbReference>
<dbReference type="FunFam" id="1.10.10.10:FF:000027">
    <property type="entry name" value="Heat shock transcription factor 1"/>
    <property type="match status" value="1"/>
</dbReference>
<dbReference type="Gene3D" id="1.10.10.10">
    <property type="entry name" value="Winged helix-like DNA-binding domain superfamily/Winged helix DNA-binding domain"/>
    <property type="match status" value="1"/>
</dbReference>
<dbReference type="InterPro" id="IPR000232">
    <property type="entry name" value="HSF_DNA-bd"/>
</dbReference>
<dbReference type="InterPro" id="IPR010542">
    <property type="entry name" value="Vert_HSTF_C"/>
</dbReference>
<dbReference type="InterPro" id="IPR036388">
    <property type="entry name" value="WH-like_DNA-bd_sf"/>
</dbReference>
<dbReference type="InterPro" id="IPR036390">
    <property type="entry name" value="WH_DNA-bd_sf"/>
</dbReference>
<dbReference type="PANTHER" id="PTHR10015:SF185">
    <property type="entry name" value="HEAT SHOCK FACTOR PROTEIN 2"/>
    <property type="match status" value="1"/>
</dbReference>
<dbReference type="PANTHER" id="PTHR10015">
    <property type="entry name" value="HEAT SHOCK TRANSCRIPTION FACTOR"/>
    <property type="match status" value="1"/>
</dbReference>
<dbReference type="Pfam" id="PF00447">
    <property type="entry name" value="HSF_DNA-bind"/>
    <property type="match status" value="1"/>
</dbReference>
<dbReference type="Pfam" id="PF06546">
    <property type="entry name" value="Vert_HS_TF"/>
    <property type="match status" value="1"/>
</dbReference>
<dbReference type="PRINTS" id="PR00056">
    <property type="entry name" value="HSFDOMAIN"/>
</dbReference>
<dbReference type="SMART" id="SM00415">
    <property type="entry name" value="HSF"/>
    <property type="match status" value="1"/>
</dbReference>
<dbReference type="SUPFAM" id="SSF46785">
    <property type="entry name" value="Winged helix' DNA-binding domain"/>
    <property type="match status" value="1"/>
</dbReference>
<dbReference type="PROSITE" id="PS00434">
    <property type="entry name" value="HSF_DOMAIN"/>
    <property type="match status" value="1"/>
</dbReference>
<accession>P38530</accession>
<accession>I7FPS8</accession>
<protein>
    <recommendedName>
        <fullName>Heat shock factor protein 2</fullName>
        <shortName>HSF 2</shortName>
    </recommendedName>
    <alternativeName>
        <fullName>HSF 3B</fullName>
    </alternativeName>
    <alternativeName>
        <fullName>HSTF 3B</fullName>
    </alternativeName>
    <alternativeName>
        <fullName>Heat shock transcription factor 2</fullName>
        <shortName>HSTF 2</shortName>
    </alternativeName>
</protein>
<reference key="1">
    <citation type="journal article" date="1993" name="Mol. Cell. Biol.">
        <title>Characterization of a novel chicken heat shock transcription factor, heat shock factor 3, suggests a new regulatory pathway.</title>
        <authorList>
            <person name="Nakai A."/>
            <person name="Morimoto R.I."/>
        </authorList>
    </citation>
    <scope>NUCLEOTIDE SEQUENCE [MRNA]</scope>
</reference>
<feature type="chain" id="PRO_0000124575" description="Heat shock factor protein 2">
    <location>
        <begin position="1"/>
        <end position="564"/>
    </location>
</feature>
<feature type="DNA-binding region" evidence="1">
    <location>
        <begin position="21"/>
        <end position="126"/>
    </location>
</feature>
<feature type="region of interest" description="Hydrophobic repeat HR-A/B">
    <location>
        <begin position="133"/>
        <end position="206"/>
    </location>
</feature>
<feature type="region of interest" description="Disordered" evidence="2">
    <location>
        <begin position="271"/>
        <end position="301"/>
    </location>
</feature>
<feature type="region of interest" description="Disordered" evidence="2">
    <location>
        <begin position="320"/>
        <end position="347"/>
    </location>
</feature>
<feature type="region of interest" description="Hydrophobic repeat HR-C">
    <location>
        <begin position="390"/>
        <end position="415"/>
    </location>
</feature>
<feature type="region of interest" description="Disordered" evidence="2">
    <location>
        <begin position="448"/>
        <end position="468"/>
    </location>
</feature>
<feature type="compositionally biased region" description="Acidic residues" evidence="2">
    <location>
        <begin position="271"/>
        <end position="280"/>
    </location>
</feature>
<feature type="compositionally biased region" description="Polar residues" evidence="2">
    <location>
        <begin position="448"/>
        <end position="465"/>
    </location>
</feature>
<keyword id="KW-0010">Activator</keyword>
<keyword id="KW-0963">Cytoplasm</keyword>
<keyword id="KW-0238">DNA-binding</keyword>
<keyword id="KW-0539">Nucleus</keyword>
<keyword id="KW-0597">Phosphoprotein</keyword>
<keyword id="KW-1185">Reference proteome</keyword>
<keyword id="KW-0346">Stress response</keyword>
<keyword id="KW-0804">Transcription</keyword>
<keyword id="KW-0805">Transcription regulation</keyword>
<organism>
    <name type="scientific">Gallus gallus</name>
    <name type="common">Chicken</name>
    <dbReference type="NCBI Taxonomy" id="9031"/>
    <lineage>
        <taxon>Eukaryota</taxon>
        <taxon>Metazoa</taxon>
        <taxon>Chordata</taxon>
        <taxon>Craniata</taxon>
        <taxon>Vertebrata</taxon>
        <taxon>Euteleostomi</taxon>
        <taxon>Archelosauria</taxon>
        <taxon>Archosauria</taxon>
        <taxon>Dinosauria</taxon>
        <taxon>Saurischia</taxon>
        <taxon>Theropoda</taxon>
        <taxon>Coelurosauria</taxon>
        <taxon>Aves</taxon>
        <taxon>Neognathae</taxon>
        <taxon>Galloanserae</taxon>
        <taxon>Galliformes</taxon>
        <taxon>Phasianidae</taxon>
        <taxon>Phasianinae</taxon>
        <taxon>Gallus</taxon>
    </lineage>
</organism>
<proteinExistence type="evidence at transcript level"/>
<evidence type="ECO:0000250" key="1"/>
<evidence type="ECO:0000256" key="2">
    <source>
        <dbReference type="SAM" id="MobiDB-lite"/>
    </source>
</evidence>
<evidence type="ECO:0000305" key="3"/>
<gene>
    <name type="primary">HSF2</name>
</gene>
<sequence length="564" mass="62827">MKQEPQQQQPAQQPPPAGAGVPAFLSKLWALVGEAPSNQLITWSQNGQSFLVLDEQRFAKEILPKYFKHNNMASFVRQLNMYGFRKVVHVDSGIVKLERDGLVEFQHPYFKQGREDLLEHIKRKVSSSRPEENKISQEDLSKIISSAQKVEIKQETIESRLSALKRENESLWREVAELRAKHLKQQQVIRKIVQFIVTLVQNNQLVSLKRKRPLLLNTNGPTKSNVFQQIVKEPADNNNHVPLNRTEGLKQREQISDDIIIYDVTEDVADEENTMVDEENAPITPETNEDTTSDSSNCSRSPDIVIVEDDNEEEYAPVIQGDKSTESVAVSANDPLSPVSDSTSPLMSSAVQLNNQSTLTAEDPVSMMDSILNENGVISQNINLLGKVELLDYLDSIDCSLEDFQAMLSGRQFSIDPDLLFDLFTSSVQMNPTDHIPNTKMETKGIETTKSNAGPAASQETQVSKPKSDKQLIQYTAFPLLAFLDGNPGSTVESGSSATETPSSVDKPLEVDELLESSLDPEPTQSKLVRLEPLTEAEASEATLFYLCELAPAPMDTDMPFLDN</sequence>
<comment type="function">
    <text>DNA-binding protein that specifically binds heat shock promoter elements (HSE) and activates transcription. HSF2 shows constitutive DNA binding activity, even without heat shock.</text>
</comment>
<comment type="subunit">
    <text>Homotrimer.</text>
</comment>
<comment type="subcellular location">
    <subcellularLocation>
        <location evidence="1">Cytoplasm</location>
    </subcellularLocation>
    <subcellularLocation>
        <location evidence="1">Nucleus</location>
    </subcellularLocation>
    <text evidence="1">Cytoplasmic during normal growth and moves to the nucleus upon activation.</text>
</comment>
<comment type="tissue specificity">
    <text>Expressed in most tissues with the exceptions of blood and liver.</text>
</comment>
<comment type="developmental stage">
    <text>Expressed during development.</text>
</comment>
<comment type="similarity">
    <text evidence="3">Belongs to the HSF family.</text>
</comment>